<evidence type="ECO:0000255" key="1"/>
<evidence type="ECO:0000256" key="2">
    <source>
        <dbReference type="SAM" id="MobiDB-lite"/>
    </source>
</evidence>
<evidence type="ECO:0000305" key="3"/>
<proteinExistence type="predicted"/>
<protein>
    <recommendedName>
        <fullName>Protein RL8A</fullName>
    </recommendedName>
</protein>
<accession>F7V995</accession>
<reference key="1">
    <citation type="journal article" date="2004" name="J. Gen. Virol.">
        <title>Genetic content of wild-type human cytomegalovirus.</title>
        <authorList>
            <person name="Dolan A."/>
            <person name="Cunningham C."/>
            <person name="Hector R.D."/>
            <person name="Hassan-Walker A.F."/>
            <person name="Lee L."/>
            <person name="Addison C."/>
            <person name="Dargan D.J."/>
            <person name="McGeoch D.J."/>
            <person name="Gatherer D."/>
            <person name="Emery V.C."/>
            <person name="Griffiths P.D."/>
            <person name="Sinzger C."/>
            <person name="McSharry B.P."/>
            <person name="Wilkinson G.W.G."/>
            <person name="Davison A.J."/>
        </authorList>
    </citation>
    <scope>NUCLEOTIDE SEQUENCE [LARGE SCALE GENOMIC DNA]</scope>
</reference>
<name>RL8A_HCMVM</name>
<organismHost>
    <name type="scientific">Homo sapiens</name>
    <name type="common">Human</name>
    <dbReference type="NCBI Taxonomy" id="9606"/>
</organismHost>
<gene>
    <name type="primary">RL8A</name>
</gene>
<sequence>MPHGHLRQALSPTSWTCEGLLLLLGLLVLFFHHHNQSAVERRRRVSFVEADRLPHESGWYSSDDDGDRDGDEETGESHNRNSVGLSAVFS</sequence>
<comment type="subcellular location">
    <subcellularLocation>
        <location evidence="3">Host membrane</location>
        <topology evidence="3">Single-pass membrane protein</topology>
    </subcellularLocation>
</comment>
<dbReference type="EMBL" id="AY446894">
    <property type="protein sequence ID" value="AEJ33666.1"/>
    <property type="molecule type" value="Genomic_DNA"/>
</dbReference>
<dbReference type="RefSeq" id="YP_004940329.1">
    <property type="nucleotide sequence ID" value="NC_006273.2"/>
</dbReference>
<dbReference type="SMR" id="F7V995"/>
<dbReference type="KEGG" id="vg:13229469"/>
<dbReference type="Reactome" id="R-HSA-9610379">
    <property type="pathway name" value="HCMV Late Events"/>
</dbReference>
<dbReference type="Proteomes" id="UP000000938">
    <property type="component" value="Segment"/>
</dbReference>
<dbReference type="GO" id="GO:0033644">
    <property type="term" value="C:host cell membrane"/>
    <property type="evidence" value="ECO:0007669"/>
    <property type="project" value="UniProtKB-SubCell"/>
</dbReference>
<dbReference type="GO" id="GO:0016020">
    <property type="term" value="C:membrane"/>
    <property type="evidence" value="ECO:0007669"/>
    <property type="project" value="UniProtKB-KW"/>
</dbReference>
<keyword id="KW-1043">Host membrane</keyword>
<keyword id="KW-0472">Membrane</keyword>
<keyword id="KW-1185">Reference proteome</keyword>
<keyword id="KW-0812">Transmembrane</keyword>
<keyword id="KW-1133">Transmembrane helix</keyword>
<organism>
    <name type="scientific">Human cytomegalovirus (strain Merlin)</name>
    <name type="common">HHV-5</name>
    <name type="synonym">Human herpesvirus 5</name>
    <dbReference type="NCBI Taxonomy" id="295027"/>
    <lineage>
        <taxon>Viruses</taxon>
        <taxon>Duplodnaviria</taxon>
        <taxon>Heunggongvirae</taxon>
        <taxon>Peploviricota</taxon>
        <taxon>Herviviricetes</taxon>
        <taxon>Herpesvirales</taxon>
        <taxon>Orthoherpesviridae</taxon>
        <taxon>Betaherpesvirinae</taxon>
        <taxon>Cytomegalovirus</taxon>
        <taxon>Cytomegalovirus humanbeta5</taxon>
        <taxon>Human cytomegalovirus</taxon>
    </lineage>
</organism>
<feature type="chain" id="PRO_0000418307" description="Protein RL8A">
    <location>
        <begin position="1"/>
        <end position="90"/>
    </location>
</feature>
<feature type="transmembrane region" description="Helical" evidence="1">
    <location>
        <begin position="15"/>
        <end position="34"/>
    </location>
</feature>
<feature type="region of interest" description="Disordered" evidence="2">
    <location>
        <begin position="55"/>
        <end position="90"/>
    </location>
</feature>
<feature type="compositionally biased region" description="Acidic residues" evidence="2">
    <location>
        <begin position="62"/>
        <end position="74"/>
    </location>
</feature>
<feature type="compositionally biased region" description="Polar residues" evidence="2">
    <location>
        <begin position="80"/>
        <end position="90"/>
    </location>
</feature>